<name>MDS1_PHYTB</name>
<accession>C0HLE1</accession>
<organism>
    <name type="scientific">Phyllomedusa trinitatis</name>
    <name type="common">Trinidad leaf frog</name>
    <dbReference type="NCBI Taxonomy" id="332092"/>
    <lineage>
        <taxon>Eukaryota</taxon>
        <taxon>Metazoa</taxon>
        <taxon>Chordata</taxon>
        <taxon>Craniata</taxon>
        <taxon>Vertebrata</taxon>
        <taxon>Euteleostomi</taxon>
        <taxon>Amphibia</taxon>
        <taxon>Batrachia</taxon>
        <taxon>Anura</taxon>
        <taxon>Neobatrachia</taxon>
        <taxon>Hyloidea</taxon>
        <taxon>Hylidae</taxon>
        <taxon>Phyllomedusinae</taxon>
        <taxon>Phyllomedusa</taxon>
    </lineage>
</organism>
<reference key="1">
    <citation type="journal article" date="2018" name="Comp. Biochem. Physiol.">
        <title>Peptidomic analysis of the host-defense peptides in skin secretions of the Trinidadian leaf frog Phyllomedusa trinitatis (Phyllomedusidae).</title>
        <authorList>
            <person name="Mechkarska M."/>
            <person name="Coquet L."/>
            <person name="Leprince J."/>
            <person name="Auguste R.J."/>
            <person name="Jouenne T."/>
            <person name="Mangoni M.L."/>
            <person name="Conlon J.M."/>
        </authorList>
    </citation>
    <scope>PROTEIN SEQUENCE</scope>
    <scope>FUNCTION</scope>
    <scope>SYNTHESIS</scope>
    <scope>SUBCELLULAR LOCATION</scope>
    <scope>MASS SPECTROMETRY</scope>
    <scope>AMIDATION AT LEU-18</scope>
    <source>
        <tissue>Skin secretion</tissue>
    </source>
</reference>
<reference key="2">
    <citation type="journal article" date="2019" name="J. Pept. Sci.">
        <title>Immunomodulatory, insulinotropic, and cytotoxic activities of phylloseptins and plasticin-TR from the Trinidanian leaf frog Phyllomedusa trinitatis.</title>
        <authorList>
            <person name="Pantic J."/>
            <person name="Guilhaudis L."/>
            <person name="Musale V."/>
            <person name="Attoub S."/>
            <person name="Lukic M.L."/>
            <person name="Mechkarska M."/>
            <person name="Conlon J.M."/>
        </authorList>
    </citation>
    <scope>FUNCTION</scope>
    <scope>SYNTHESIS</scope>
</reference>
<keyword id="KW-0027">Amidation</keyword>
<keyword id="KW-0878">Amphibian defense peptide</keyword>
<keyword id="KW-0044">Antibiotic</keyword>
<keyword id="KW-0929">Antimicrobial</keyword>
<keyword id="KW-0204">Cytolysis</keyword>
<keyword id="KW-0903">Direct protein sequencing</keyword>
<keyword id="KW-0354">Hemolysis</keyword>
<keyword id="KW-0391">Immunity</keyword>
<keyword id="KW-0399">Innate immunity</keyword>
<keyword id="KW-0964">Secreted</keyword>
<sequence>LLGMIPVAITAISALSKL</sequence>
<proteinExistence type="evidence at protein level"/>
<dbReference type="GO" id="GO:0005576">
    <property type="term" value="C:extracellular region"/>
    <property type="evidence" value="ECO:0007669"/>
    <property type="project" value="UniProtKB-SubCell"/>
</dbReference>
<dbReference type="GO" id="GO:0042742">
    <property type="term" value="P:defense response to bacterium"/>
    <property type="evidence" value="ECO:0007669"/>
    <property type="project" value="UniProtKB-KW"/>
</dbReference>
<dbReference type="GO" id="GO:0045087">
    <property type="term" value="P:innate immune response"/>
    <property type="evidence" value="ECO:0007669"/>
    <property type="project" value="UniProtKB-KW"/>
</dbReference>
<dbReference type="GO" id="GO:0031640">
    <property type="term" value="P:killing of cells of another organism"/>
    <property type="evidence" value="ECO:0007669"/>
    <property type="project" value="UniProtKB-KW"/>
</dbReference>
<protein>
    <recommendedName>
        <fullName evidence="5">Medusin-TR1</fullName>
        <shortName evidence="5">MDS-TR1</shortName>
    </recommendedName>
    <alternativeName>
        <fullName evidence="4">Phylloseptin-4TR</fullName>
        <shortName evidence="5">PLS-4TR</shortName>
    </alternativeName>
</protein>
<evidence type="ECO:0000250" key="1">
    <source>
        <dbReference type="UniProtKB" id="A0A1M4BLT1"/>
    </source>
</evidence>
<evidence type="ECO:0000269" key="2">
    <source>
    </source>
</evidence>
<evidence type="ECO:0000269" key="3">
    <source>
    </source>
</evidence>
<evidence type="ECO:0000303" key="4">
    <source>
    </source>
</evidence>
<evidence type="ECO:0000305" key="5"/>
<evidence type="ECO:0000305" key="6">
    <source>
    </source>
</evidence>
<comment type="function">
    <text evidence="1 2 3">Antimicrobial peptide with activity against Gram-positive bacteria S.epidermidis ATCC 12228 (MIC=50 uM) and S.aureus (MIC=64 ug/ml and MBC=128 ug/ml) (By similarity) (PubMed:29980138). Not active against some Gram-positive bacteria (methicillin-resistant S.aureus (MRSA), E.faecalis), Gram-negative bacterium E.coli ATCC 25922 and fungus C.albicans at concentrations up to 100 uM (By similarity) (PubMed:29980138). Can only slightly inhibit the formation of biofilm by S.aureus (minimal biofilm inhibitionconcentration MBIC=512 ug/ml, minimal biofilm eradication concentration MBEC&gt;512 ug/ml) (By similarity). Has an anti-inflammatory effect, since it inhibits the production of the pro-inflammatory cytokines TNF-alpha and IL-1beta (PubMed:30734396). Has high activity of stimulation of insulin release, which may protect the species from being eaten by predators by causing fatal hypoglycemia (PubMed:30734396). Is not cytotoxic to cancer line cells (PubMed:30734396). Shows very low hemolysis on horse erythrocytes and moderate hemolysis on mouse erythrocytes (By similarity) (PubMed:29980138, PubMed:30734396).</text>
</comment>
<comment type="subcellular location">
    <subcellularLocation>
        <location evidence="2">Secreted</location>
    </subcellularLocation>
</comment>
<comment type="tissue specificity">
    <text evidence="6">Expressed by the skin glands.</text>
</comment>
<comment type="mass spectrometry"/>
<comment type="miscellaneous">
    <text evidence="5">The primary structure of this peptide is identical to that of Medusin-PT (AC A0A1M4BLT1).</text>
</comment>
<comment type="similarity">
    <text evidence="5">Belongs to the frog skin active peptide (FSAP) family. Medusin subfamily.</text>
</comment>
<comment type="online information" name="The antimicrobial peptide database">
    <link uri="https://wangapd3.com/database/query_output.php?ID=02995"/>
</comment>
<feature type="peptide" id="PRO_0000445201" description="Medusin-TR1" evidence="2">
    <location>
        <begin position="1"/>
        <end position="18"/>
    </location>
</feature>
<feature type="modified residue" description="Leucine amide" evidence="2">
    <location>
        <position position="18"/>
    </location>
</feature>